<protein>
    <recommendedName>
        <fullName evidence="1">DNA gyrase inhibitor YacG</fullName>
    </recommendedName>
</protein>
<comment type="function">
    <text evidence="1">Inhibits all the catalytic activities of DNA gyrase by preventing its interaction with DNA. Acts by binding directly to the C-terminal domain of GyrB, which probably disrupts DNA binding by the gyrase.</text>
</comment>
<comment type="cofactor">
    <cofactor evidence="1">
        <name>Zn(2+)</name>
        <dbReference type="ChEBI" id="CHEBI:29105"/>
    </cofactor>
    <text evidence="1">Binds 1 zinc ion.</text>
</comment>
<comment type="subunit">
    <text evidence="1">Interacts with GyrB.</text>
</comment>
<comment type="similarity">
    <text evidence="1">Belongs to the DNA gyrase inhibitor YacG family.</text>
</comment>
<proteinExistence type="inferred from homology"/>
<dbReference type="EMBL" id="CP000503">
    <property type="protein sequence ID" value="ABM23362.1"/>
    <property type="molecule type" value="Genomic_DNA"/>
</dbReference>
<dbReference type="RefSeq" id="WP_011787898.1">
    <property type="nucleotide sequence ID" value="NC_008750.1"/>
</dbReference>
<dbReference type="SMR" id="A1RFB7"/>
<dbReference type="KEGG" id="shw:Sputw3181_0511"/>
<dbReference type="HOGENOM" id="CLU_178280_1_0_6"/>
<dbReference type="Proteomes" id="UP000002597">
    <property type="component" value="Chromosome"/>
</dbReference>
<dbReference type="GO" id="GO:0008657">
    <property type="term" value="F:DNA topoisomerase type II (double strand cut, ATP-hydrolyzing) inhibitor activity"/>
    <property type="evidence" value="ECO:0007669"/>
    <property type="project" value="UniProtKB-UniRule"/>
</dbReference>
<dbReference type="GO" id="GO:0008270">
    <property type="term" value="F:zinc ion binding"/>
    <property type="evidence" value="ECO:0007669"/>
    <property type="project" value="UniProtKB-UniRule"/>
</dbReference>
<dbReference type="GO" id="GO:0006355">
    <property type="term" value="P:regulation of DNA-templated transcription"/>
    <property type="evidence" value="ECO:0007669"/>
    <property type="project" value="InterPro"/>
</dbReference>
<dbReference type="Gene3D" id="3.30.50.10">
    <property type="entry name" value="Erythroid Transcription Factor GATA-1, subunit A"/>
    <property type="match status" value="1"/>
</dbReference>
<dbReference type="HAMAP" id="MF_00649">
    <property type="entry name" value="DNA_gyrase_inhibitor_YacG"/>
    <property type="match status" value="1"/>
</dbReference>
<dbReference type="InterPro" id="IPR005584">
    <property type="entry name" value="DNA_gyrase_inhibitor_YacG"/>
</dbReference>
<dbReference type="InterPro" id="IPR013088">
    <property type="entry name" value="Znf_NHR/GATA"/>
</dbReference>
<dbReference type="NCBIfam" id="NF001638">
    <property type="entry name" value="PRK00418.1"/>
    <property type="match status" value="1"/>
</dbReference>
<dbReference type="PANTHER" id="PTHR36150">
    <property type="entry name" value="DNA GYRASE INHIBITOR YACG"/>
    <property type="match status" value="1"/>
</dbReference>
<dbReference type="PANTHER" id="PTHR36150:SF1">
    <property type="entry name" value="DNA GYRASE INHIBITOR YACG"/>
    <property type="match status" value="1"/>
</dbReference>
<dbReference type="Pfam" id="PF03884">
    <property type="entry name" value="YacG"/>
    <property type="match status" value="1"/>
</dbReference>
<dbReference type="SUPFAM" id="SSF57716">
    <property type="entry name" value="Glucocorticoid receptor-like (DNA-binding domain)"/>
    <property type="match status" value="1"/>
</dbReference>
<accession>A1RFB7</accession>
<gene>
    <name evidence="1" type="primary">yacG</name>
    <name type="ordered locus">Sputw3181_0511</name>
</gene>
<feature type="chain" id="PRO_1000056996" description="DNA gyrase inhibitor YacG">
    <location>
        <begin position="1"/>
        <end position="69"/>
    </location>
</feature>
<feature type="binding site" evidence="1">
    <location>
        <position position="7"/>
    </location>
    <ligand>
        <name>Zn(2+)</name>
        <dbReference type="ChEBI" id="CHEBI:29105"/>
    </ligand>
</feature>
<feature type="binding site" evidence="1">
    <location>
        <position position="10"/>
    </location>
    <ligand>
        <name>Zn(2+)</name>
        <dbReference type="ChEBI" id="CHEBI:29105"/>
    </ligand>
</feature>
<feature type="binding site" evidence="1">
    <location>
        <position position="26"/>
    </location>
    <ligand>
        <name>Zn(2+)</name>
        <dbReference type="ChEBI" id="CHEBI:29105"/>
    </ligand>
</feature>
<feature type="binding site" evidence="1">
    <location>
        <position position="30"/>
    </location>
    <ligand>
        <name>Zn(2+)</name>
        <dbReference type="ChEBI" id="CHEBI:29105"/>
    </ligand>
</feature>
<evidence type="ECO:0000255" key="1">
    <source>
        <dbReference type="HAMAP-Rule" id="MF_00649"/>
    </source>
</evidence>
<keyword id="KW-0479">Metal-binding</keyword>
<keyword id="KW-0862">Zinc</keyword>
<name>YACG_SHESW</name>
<organism>
    <name type="scientific">Shewanella sp. (strain W3-18-1)</name>
    <dbReference type="NCBI Taxonomy" id="351745"/>
    <lineage>
        <taxon>Bacteria</taxon>
        <taxon>Pseudomonadati</taxon>
        <taxon>Pseudomonadota</taxon>
        <taxon>Gammaproteobacteria</taxon>
        <taxon>Alteromonadales</taxon>
        <taxon>Shewanellaceae</taxon>
        <taxon>Shewanella</taxon>
    </lineage>
</organism>
<sequence length="69" mass="7965">MPLTVKCPICKTPVEWAPQSEFKPFCSERCKLIDLADWASEKHAIPVKSEFDLDALDEFDLDEDAFFKE</sequence>
<reference key="1">
    <citation type="submission" date="2006-12" db="EMBL/GenBank/DDBJ databases">
        <title>Complete sequence of Shewanella sp. W3-18-1.</title>
        <authorList>
            <consortium name="US DOE Joint Genome Institute"/>
            <person name="Copeland A."/>
            <person name="Lucas S."/>
            <person name="Lapidus A."/>
            <person name="Barry K."/>
            <person name="Detter J.C."/>
            <person name="Glavina del Rio T."/>
            <person name="Hammon N."/>
            <person name="Israni S."/>
            <person name="Dalin E."/>
            <person name="Tice H."/>
            <person name="Pitluck S."/>
            <person name="Chain P."/>
            <person name="Malfatti S."/>
            <person name="Shin M."/>
            <person name="Vergez L."/>
            <person name="Schmutz J."/>
            <person name="Larimer F."/>
            <person name="Land M."/>
            <person name="Hauser L."/>
            <person name="Kyrpides N."/>
            <person name="Lykidis A."/>
            <person name="Tiedje J."/>
            <person name="Richardson P."/>
        </authorList>
    </citation>
    <scope>NUCLEOTIDE SEQUENCE [LARGE SCALE GENOMIC DNA]</scope>
    <source>
        <strain>W3-18-1</strain>
    </source>
</reference>